<keyword id="KW-1015">Disulfide bond</keyword>
<keyword id="KW-0378">Hydrolase</keyword>
<keyword id="KW-0645">Protease</keyword>
<keyword id="KW-1185">Reference proteome</keyword>
<keyword id="KW-0720">Serine protease</keyword>
<keyword id="KW-0732">Signal</keyword>
<keyword id="KW-0865">Zymogen</keyword>
<evidence type="ECO:0000250" key="1"/>
<evidence type="ECO:0000255" key="2">
    <source>
        <dbReference type="PROSITE-ProRule" id="PRU00274"/>
    </source>
</evidence>
<dbReference type="EC" id="3.4.21.-"/>
<dbReference type="EMBL" id="AF007119">
    <property type="protein sequence ID" value="AAB65245.1"/>
    <property type="molecule type" value="Genomic_DNA"/>
</dbReference>
<dbReference type="EMBL" id="AF007120">
    <property type="protein sequence ID" value="AAB65246.1"/>
    <property type="molecule type" value="mRNA"/>
</dbReference>
<dbReference type="CCDS" id="CCDS27138.1"/>
<dbReference type="RefSeq" id="NP_034912.3">
    <property type="nucleotide sequence ID" value="NM_010782.3"/>
</dbReference>
<dbReference type="SMR" id="O35164"/>
<dbReference type="BioGRID" id="201361">
    <property type="interactions" value="1"/>
</dbReference>
<dbReference type="FunCoup" id="O35164">
    <property type="interactions" value="174"/>
</dbReference>
<dbReference type="STRING" id="10090.ENSMUSP00000093476"/>
<dbReference type="BindingDB" id="O35164"/>
<dbReference type="ChEMBL" id="CHEMBL2132"/>
<dbReference type="MEROPS" id="S01.304"/>
<dbReference type="PaxDb" id="10090-ENSMUSP00000093476"/>
<dbReference type="DNASU" id="17232"/>
<dbReference type="Ensembl" id="ENSMUST00000095798.2">
    <property type="protein sequence ID" value="ENSMUSP00000093476.2"/>
    <property type="gene ID" value="ENSMUSG00000071361.2"/>
</dbReference>
<dbReference type="GeneID" id="17232"/>
<dbReference type="KEGG" id="mmu:17232"/>
<dbReference type="UCSC" id="uc007ubj.1">
    <property type="organism name" value="mouse"/>
</dbReference>
<dbReference type="AGR" id="MGI:1194491"/>
<dbReference type="CTD" id="17232"/>
<dbReference type="MGI" id="MGI:1194491">
    <property type="gene designation" value="Mcpt9"/>
</dbReference>
<dbReference type="VEuPathDB" id="HostDB:ENSMUSG00000071361"/>
<dbReference type="eggNOG" id="KOG3627">
    <property type="taxonomic scope" value="Eukaryota"/>
</dbReference>
<dbReference type="GeneTree" id="ENSGT01030000234551"/>
<dbReference type="HOGENOM" id="CLU_006842_1_0_1"/>
<dbReference type="InParanoid" id="O35164"/>
<dbReference type="OMA" id="GSIPCEE"/>
<dbReference type="OrthoDB" id="5565075at2759"/>
<dbReference type="PhylomeDB" id="O35164"/>
<dbReference type="TreeFam" id="TF333630"/>
<dbReference type="BioGRID-ORCS" id="17232">
    <property type="hits" value="2 hits in 44 CRISPR screens"/>
</dbReference>
<dbReference type="PRO" id="PR:O35164"/>
<dbReference type="Proteomes" id="UP000000589">
    <property type="component" value="Chromosome 14"/>
</dbReference>
<dbReference type="RNAct" id="O35164">
    <property type="molecule type" value="protein"/>
</dbReference>
<dbReference type="Bgee" id="ENSMUSG00000071361">
    <property type="expression patterns" value="Expressed in colon"/>
</dbReference>
<dbReference type="GO" id="GO:0004252">
    <property type="term" value="F:serine-type endopeptidase activity"/>
    <property type="evidence" value="ECO:0007669"/>
    <property type="project" value="InterPro"/>
</dbReference>
<dbReference type="GO" id="GO:0006508">
    <property type="term" value="P:proteolysis"/>
    <property type="evidence" value="ECO:0007669"/>
    <property type="project" value="UniProtKB-KW"/>
</dbReference>
<dbReference type="CDD" id="cd00190">
    <property type="entry name" value="Tryp_SPc"/>
    <property type="match status" value="1"/>
</dbReference>
<dbReference type="FunFam" id="2.40.10.10:FF:000014">
    <property type="entry name" value="Complement factor D"/>
    <property type="match status" value="1"/>
</dbReference>
<dbReference type="FunFam" id="2.40.10.10:FF:000068">
    <property type="entry name" value="transmembrane protease serine 2"/>
    <property type="match status" value="1"/>
</dbReference>
<dbReference type="Gene3D" id="2.40.10.10">
    <property type="entry name" value="Trypsin-like serine proteases"/>
    <property type="match status" value="2"/>
</dbReference>
<dbReference type="InterPro" id="IPR009003">
    <property type="entry name" value="Peptidase_S1_PA"/>
</dbReference>
<dbReference type="InterPro" id="IPR043504">
    <property type="entry name" value="Peptidase_S1_PA_chymotrypsin"/>
</dbReference>
<dbReference type="InterPro" id="IPR001314">
    <property type="entry name" value="Peptidase_S1A"/>
</dbReference>
<dbReference type="InterPro" id="IPR001254">
    <property type="entry name" value="Trypsin_dom"/>
</dbReference>
<dbReference type="InterPro" id="IPR018114">
    <property type="entry name" value="TRYPSIN_HIS"/>
</dbReference>
<dbReference type="InterPro" id="IPR033116">
    <property type="entry name" value="TRYPSIN_SER"/>
</dbReference>
<dbReference type="PANTHER" id="PTHR24271:SF23">
    <property type="entry name" value="CHYMASE 2, MAST CELL-RELATED"/>
    <property type="match status" value="1"/>
</dbReference>
<dbReference type="PANTHER" id="PTHR24271">
    <property type="entry name" value="KALLIKREIN-RELATED"/>
    <property type="match status" value="1"/>
</dbReference>
<dbReference type="Pfam" id="PF00089">
    <property type="entry name" value="Trypsin"/>
    <property type="match status" value="1"/>
</dbReference>
<dbReference type="PRINTS" id="PR00722">
    <property type="entry name" value="CHYMOTRYPSIN"/>
</dbReference>
<dbReference type="SMART" id="SM00020">
    <property type="entry name" value="Tryp_SPc"/>
    <property type="match status" value="1"/>
</dbReference>
<dbReference type="SUPFAM" id="SSF50494">
    <property type="entry name" value="Trypsin-like serine proteases"/>
    <property type="match status" value="1"/>
</dbReference>
<dbReference type="PROSITE" id="PS50240">
    <property type="entry name" value="TRYPSIN_DOM"/>
    <property type="match status" value="1"/>
</dbReference>
<dbReference type="PROSITE" id="PS00134">
    <property type="entry name" value="TRYPSIN_HIS"/>
    <property type="match status" value="1"/>
</dbReference>
<dbReference type="PROSITE" id="PS00135">
    <property type="entry name" value="TRYPSIN_SER"/>
    <property type="match status" value="1"/>
</dbReference>
<feature type="signal peptide" evidence="1">
    <location>
        <begin position="1"/>
        <end position="18"/>
    </location>
</feature>
<feature type="propeptide" id="PRO_0000027459" description="Activation peptide" evidence="1">
    <location>
        <begin position="19"/>
        <end position="20"/>
    </location>
</feature>
<feature type="chain" id="PRO_0000027460" description="Mast cell protease 9">
    <location>
        <begin position="21"/>
        <end position="246"/>
    </location>
</feature>
<feature type="domain" description="Peptidase S1" evidence="2">
    <location>
        <begin position="21"/>
        <end position="244"/>
    </location>
</feature>
<feature type="active site" description="Charge relay system" evidence="1">
    <location>
        <position position="65"/>
    </location>
</feature>
<feature type="active site" description="Charge relay system" evidence="1">
    <location>
        <position position="109"/>
    </location>
</feature>
<feature type="active site" description="Charge relay system" evidence="1">
    <location>
        <position position="202"/>
    </location>
</feature>
<feature type="disulfide bond" evidence="2">
    <location>
        <begin position="50"/>
        <end position="66"/>
    </location>
</feature>
<feature type="disulfide bond" evidence="2">
    <location>
        <begin position="143"/>
        <end position="208"/>
    </location>
</feature>
<feature type="disulfide bond" evidence="2">
    <location>
        <begin position="174"/>
        <end position="187"/>
    </location>
</feature>
<organism>
    <name type="scientific">Mus musculus</name>
    <name type="common">Mouse</name>
    <dbReference type="NCBI Taxonomy" id="10090"/>
    <lineage>
        <taxon>Eukaryota</taxon>
        <taxon>Metazoa</taxon>
        <taxon>Chordata</taxon>
        <taxon>Craniata</taxon>
        <taxon>Vertebrata</taxon>
        <taxon>Euteleostomi</taxon>
        <taxon>Mammalia</taxon>
        <taxon>Eutheria</taxon>
        <taxon>Euarchontoglires</taxon>
        <taxon>Glires</taxon>
        <taxon>Rodentia</taxon>
        <taxon>Myomorpha</taxon>
        <taxon>Muroidea</taxon>
        <taxon>Muridae</taxon>
        <taxon>Murinae</taxon>
        <taxon>Mus</taxon>
        <taxon>Mus</taxon>
    </lineage>
</organism>
<proteinExistence type="evidence at transcript level"/>
<gene>
    <name type="primary">Mcpt9</name>
</gene>
<accession>O35164</accession>
<reference key="1">
    <citation type="journal article" date="1997" name="J. Biol. Chem.">
        <title>Mouse mast cell protease 9, a novel member of the chromosome 14 family of serine proteases that is selectively expressed in uterine mast cells.</title>
        <authorList>
            <person name="Hunt J.E."/>
            <person name="Friend D.S."/>
            <person name="Gurish M.F."/>
            <person name="Feyfant E."/>
            <person name="Sali A."/>
            <person name="Huang C."/>
            <person name="Ghildyal N."/>
            <person name="Stechschulte S."/>
            <person name="Austen K.F."/>
            <person name="Stevens R.L."/>
        </authorList>
    </citation>
    <scope>NUCLEOTIDE SEQUENCE [GENOMIC DNA / MRNA]</scope>
    <source>
        <strain>BALB/cJ</strain>
    </source>
</reference>
<name>MCPT9_MOUSE</name>
<sequence>MQALLFLMALLLPSRAGAEEIIGGVESEPHSRPYMAYVNTFSKKGYVAICGGFLIAPQFVMTAAHCSGRRMTVTLGAHNVRKRECTQQKIKVEKYILPPNYNVSSKFNDIVLLKLKKQANLTSAVDVVPLPGPSDFAKPGTMCWAAGWGRTGVKKSISHTLREVELKIVGEKACKIFRHYKDSLQICVGSSTKVASVYMGDSGGPLLCAGVAHGIVSSGRGNAKPPAIFTRISPHVPWINRVIKGE</sequence>
<comment type="tissue specificity">
    <text>Selectively expressed in uterine mast cells.</text>
</comment>
<comment type="similarity">
    <text evidence="2">Belongs to the peptidase S1 family. Granzyme subfamily.</text>
</comment>
<protein>
    <recommendedName>
        <fullName>Mast cell protease 9</fullName>
        <shortName>mMCP-9</shortName>
        <ecNumber>3.4.21.-</ecNumber>
    </recommendedName>
</protein>